<evidence type="ECO:0000255" key="1">
    <source>
        <dbReference type="HAMAP-Rule" id="MF_00097"/>
    </source>
</evidence>
<feature type="chain" id="PRO_1000093679" description="Thiamine-phosphate synthase">
    <location>
        <begin position="1"/>
        <end position="207"/>
    </location>
</feature>
<feature type="binding site" evidence="1">
    <location>
        <begin position="36"/>
        <end position="40"/>
    </location>
    <ligand>
        <name>4-amino-2-methyl-5-(diphosphooxymethyl)pyrimidine</name>
        <dbReference type="ChEBI" id="CHEBI:57841"/>
    </ligand>
</feature>
<feature type="binding site" evidence="1">
    <location>
        <position position="68"/>
    </location>
    <ligand>
        <name>4-amino-2-methyl-5-(diphosphooxymethyl)pyrimidine</name>
        <dbReference type="ChEBI" id="CHEBI:57841"/>
    </ligand>
</feature>
<feature type="binding site" evidence="1">
    <location>
        <position position="69"/>
    </location>
    <ligand>
        <name>Mg(2+)</name>
        <dbReference type="ChEBI" id="CHEBI:18420"/>
    </ligand>
</feature>
<feature type="binding site" evidence="1">
    <location>
        <position position="88"/>
    </location>
    <ligand>
        <name>Mg(2+)</name>
        <dbReference type="ChEBI" id="CHEBI:18420"/>
    </ligand>
</feature>
<feature type="binding site" evidence="1">
    <location>
        <position position="106"/>
    </location>
    <ligand>
        <name>4-amino-2-methyl-5-(diphosphooxymethyl)pyrimidine</name>
        <dbReference type="ChEBI" id="CHEBI:57841"/>
    </ligand>
</feature>
<feature type="binding site" evidence="1">
    <location>
        <begin position="132"/>
        <end position="134"/>
    </location>
    <ligand>
        <name>2-[(2R,5Z)-2-carboxy-4-methylthiazol-5(2H)-ylidene]ethyl phosphate</name>
        <dbReference type="ChEBI" id="CHEBI:62899"/>
    </ligand>
</feature>
<feature type="binding site" evidence="1">
    <location>
        <position position="135"/>
    </location>
    <ligand>
        <name>4-amino-2-methyl-5-(diphosphooxymethyl)pyrimidine</name>
        <dbReference type="ChEBI" id="CHEBI:57841"/>
    </ligand>
</feature>
<feature type="binding site" evidence="1">
    <location>
        <position position="162"/>
    </location>
    <ligand>
        <name>2-[(2R,5Z)-2-carboxy-4-methylthiazol-5(2H)-ylidene]ethyl phosphate</name>
        <dbReference type="ChEBI" id="CHEBI:62899"/>
    </ligand>
</feature>
<feature type="binding site" evidence="1">
    <location>
        <begin position="182"/>
        <end position="183"/>
    </location>
    <ligand>
        <name>2-[(2R,5Z)-2-carboxy-4-methylthiazol-5(2H)-ylidene]ethyl phosphate</name>
        <dbReference type="ChEBI" id="CHEBI:62899"/>
    </ligand>
</feature>
<organism>
    <name type="scientific">Methanococcus maripaludis (strain C6 / ATCC BAA-1332)</name>
    <dbReference type="NCBI Taxonomy" id="444158"/>
    <lineage>
        <taxon>Archaea</taxon>
        <taxon>Methanobacteriati</taxon>
        <taxon>Methanobacteriota</taxon>
        <taxon>Methanomada group</taxon>
        <taxon>Methanococci</taxon>
        <taxon>Methanococcales</taxon>
        <taxon>Methanococcaceae</taxon>
        <taxon>Methanococcus</taxon>
    </lineage>
</organism>
<reference key="1">
    <citation type="submission" date="2007-10" db="EMBL/GenBank/DDBJ databases">
        <title>Complete sequence of Methanococcus maripaludis C6.</title>
        <authorList>
            <consortium name="US DOE Joint Genome Institute"/>
            <person name="Copeland A."/>
            <person name="Lucas S."/>
            <person name="Lapidus A."/>
            <person name="Barry K."/>
            <person name="Glavina del Rio T."/>
            <person name="Dalin E."/>
            <person name="Tice H."/>
            <person name="Pitluck S."/>
            <person name="Clum A."/>
            <person name="Schmutz J."/>
            <person name="Larimer F."/>
            <person name="Land M."/>
            <person name="Hauser L."/>
            <person name="Kyrpides N."/>
            <person name="Mikhailova N."/>
            <person name="Sieprawska-Lupa M."/>
            <person name="Whitman W.B."/>
            <person name="Richardson P."/>
        </authorList>
    </citation>
    <scope>NUCLEOTIDE SEQUENCE [LARGE SCALE GENOMIC DNA]</scope>
    <source>
        <strain>C6 / ATCC BAA-1332</strain>
    </source>
</reference>
<protein>
    <recommendedName>
        <fullName evidence="1">Thiamine-phosphate synthase</fullName>
        <shortName evidence="1">TP synthase</shortName>
        <shortName evidence="1">TPS</shortName>
        <ecNumber evidence="1">2.5.1.3</ecNumber>
    </recommendedName>
    <alternativeName>
        <fullName evidence="1">Thiamine-phosphate pyrophosphorylase</fullName>
        <shortName evidence="1">TMP pyrophosphorylase</shortName>
        <shortName evidence="1">TMP-PPase</shortName>
    </alternativeName>
</protein>
<comment type="function">
    <text evidence="1">Condenses 4-methyl-5-(beta-hydroxyethyl)thiazole monophosphate (THZ-P) and 2-methyl-4-amino-5-hydroxymethyl pyrimidine pyrophosphate (HMP-PP) to form thiamine monophosphate (TMP).</text>
</comment>
<comment type="catalytic activity">
    <reaction evidence="1">
        <text>2-[(2R,5Z)-2-carboxy-4-methylthiazol-5(2H)-ylidene]ethyl phosphate + 4-amino-2-methyl-5-(diphosphooxymethyl)pyrimidine + 2 H(+) = thiamine phosphate + CO2 + diphosphate</text>
        <dbReference type="Rhea" id="RHEA:47844"/>
        <dbReference type="ChEBI" id="CHEBI:15378"/>
        <dbReference type="ChEBI" id="CHEBI:16526"/>
        <dbReference type="ChEBI" id="CHEBI:33019"/>
        <dbReference type="ChEBI" id="CHEBI:37575"/>
        <dbReference type="ChEBI" id="CHEBI:57841"/>
        <dbReference type="ChEBI" id="CHEBI:62899"/>
        <dbReference type="EC" id="2.5.1.3"/>
    </reaction>
</comment>
<comment type="catalytic activity">
    <reaction evidence="1">
        <text>2-(2-carboxy-4-methylthiazol-5-yl)ethyl phosphate + 4-amino-2-methyl-5-(diphosphooxymethyl)pyrimidine + 2 H(+) = thiamine phosphate + CO2 + diphosphate</text>
        <dbReference type="Rhea" id="RHEA:47848"/>
        <dbReference type="ChEBI" id="CHEBI:15378"/>
        <dbReference type="ChEBI" id="CHEBI:16526"/>
        <dbReference type="ChEBI" id="CHEBI:33019"/>
        <dbReference type="ChEBI" id="CHEBI:37575"/>
        <dbReference type="ChEBI" id="CHEBI:57841"/>
        <dbReference type="ChEBI" id="CHEBI:62890"/>
        <dbReference type="EC" id="2.5.1.3"/>
    </reaction>
</comment>
<comment type="catalytic activity">
    <reaction evidence="1">
        <text>4-methyl-5-(2-phosphooxyethyl)-thiazole + 4-amino-2-methyl-5-(diphosphooxymethyl)pyrimidine + H(+) = thiamine phosphate + diphosphate</text>
        <dbReference type="Rhea" id="RHEA:22328"/>
        <dbReference type="ChEBI" id="CHEBI:15378"/>
        <dbReference type="ChEBI" id="CHEBI:33019"/>
        <dbReference type="ChEBI" id="CHEBI:37575"/>
        <dbReference type="ChEBI" id="CHEBI:57841"/>
        <dbReference type="ChEBI" id="CHEBI:58296"/>
        <dbReference type="EC" id="2.5.1.3"/>
    </reaction>
</comment>
<comment type="cofactor">
    <cofactor evidence="1">
        <name>Mg(2+)</name>
        <dbReference type="ChEBI" id="CHEBI:18420"/>
    </cofactor>
    <text evidence="1">Binds 1 Mg(2+) ion per subunit.</text>
</comment>
<comment type="pathway">
    <text evidence="1">Cofactor biosynthesis; thiamine diphosphate biosynthesis; thiamine phosphate from 4-amino-2-methyl-5-diphosphomethylpyrimidine and 4-methyl-5-(2-phosphoethyl)-thiazole: step 1/1.</text>
</comment>
<comment type="similarity">
    <text evidence="1">Belongs to the thiamine-phosphate synthase family.</text>
</comment>
<gene>
    <name evidence="1" type="primary">thiE</name>
    <name type="ordered locus">MmarC6_1529</name>
</gene>
<name>THIE_METM6</name>
<dbReference type="EC" id="2.5.1.3" evidence="1"/>
<dbReference type="EMBL" id="CP000867">
    <property type="protein sequence ID" value="ABX02342.1"/>
    <property type="molecule type" value="Genomic_DNA"/>
</dbReference>
<dbReference type="SMR" id="A9AAG9"/>
<dbReference type="STRING" id="444158.MmarC6_1529"/>
<dbReference type="KEGG" id="mmx:MmarC6_1529"/>
<dbReference type="eggNOG" id="arCOG01089">
    <property type="taxonomic scope" value="Archaea"/>
</dbReference>
<dbReference type="HOGENOM" id="CLU_018272_3_2_2"/>
<dbReference type="OrthoDB" id="85572at2157"/>
<dbReference type="PhylomeDB" id="A9AAG9"/>
<dbReference type="UniPathway" id="UPA00060">
    <property type="reaction ID" value="UER00141"/>
</dbReference>
<dbReference type="GO" id="GO:0005737">
    <property type="term" value="C:cytoplasm"/>
    <property type="evidence" value="ECO:0007669"/>
    <property type="project" value="TreeGrafter"/>
</dbReference>
<dbReference type="GO" id="GO:0000287">
    <property type="term" value="F:magnesium ion binding"/>
    <property type="evidence" value="ECO:0007669"/>
    <property type="project" value="UniProtKB-UniRule"/>
</dbReference>
<dbReference type="GO" id="GO:0004789">
    <property type="term" value="F:thiamine-phosphate diphosphorylase activity"/>
    <property type="evidence" value="ECO:0007669"/>
    <property type="project" value="UniProtKB-UniRule"/>
</dbReference>
<dbReference type="GO" id="GO:0009228">
    <property type="term" value="P:thiamine biosynthetic process"/>
    <property type="evidence" value="ECO:0007669"/>
    <property type="project" value="UniProtKB-KW"/>
</dbReference>
<dbReference type="GO" id="GO:0009229">
    <property type="term" value="P:thiamine diphosphate biosynthetic process"/>
    <property type="evidence" value="ECO:0007669"/>
    <property type="project" value="UniProtKB-UniRule"/>
</dbReference>
<dbReference type="CDD" id="cd00564">
    <property type="entry name" value="TMP_TenI"/>
    <property type="match status" value="1"/>
</dbReference>
<dbReference type="FunFam" id="3.20.20.70:FF:000096">
    <property type="entry name" value="Thiamine-phosphate synthase"/>
    <property type="match status" value="1"/>
</dbReference>
<dbReference type="Gene3D" id="3.20.20.70">
    <property type="entry name" value="Aldolase class I"/>
    <property type="match status" value="1"/>
</dbReference>
<dbReference type="HAMAP" id="MF_00097">
    <property type="entry name" value="TMP_synthase"/>
    <property type="match status" value="1"/>
</dbReference>
<dbReference type="InterPro" id="IPR013785">
    <property type="entry name" value="Aldolase_TIM"/>
</dbReference>
<dbReference type="InterPro" id="IPR036206">
    <property type="entry name" value="ThiamineP_synth_sf"/>
</dbReference>
<dbReference type="InterPro" id="IPR022998">
    <property type="entry name" value="ThiamineP_synth_TenI"/>
</dbReference>
<dbReference type="InterPro" id="IPR034291">
    <property type="entry name" value="TMP_synthase"/>
</dbReference>
<dbReference type="NCBIfam" id="TIGR00693">
    <property type="entry name" value="thiE"/>
    <property type="match status" value="1"/>
</dbReference>
<dbReference type="PANTHER" id="PTHR20857:SF23">
    <property type="entry name" value="THIAMINE BIOSYNTHETIC BIFUNCTIONAL ENZYME"/>
    <property type="match status" value="1"/>
</dbReference>
<dbReference type="PANTHER" id="PTHR20857">
    <property type="entry name" value="THIAMINE-PHOSPHATE PYROPHOSPHORYLASE"/>
    <property type="match status" value="1"/>
</dbReference>
<dbReference type="Pfam" id="PF02581">
    <property type="entry name" value="TMP-TENI"/>
    <property type="match status" value="1"/>
</dbReference>
<dbReference type="SUPFAM" id="SSF51391">
    <property type="entry name" value="Thiamin phosphate synthase"/>
    <property type="match status" value="1"/>
</dbReference>
<keyword id="KW-0460">Magnesium</keyword>
<keyword id="KW-0479">Metal-binding</keyword>
<keyword id="KW-0784">Thiamine biosynthesis</keyword>
<keyword id="KW-0808">Transferase</keyword>
<accession>A9AAG9</accession>
<proteinExistence type="inferred from homology"/>
<sequence length="207" mass="22302">MKFKDKLKFYVITDSNYSDEVISVEEALKGGASSIQLRMKTSSTRKMIEVGNKLRKLTSEYDALFFVNDRLDVAQAVNADGIHVGIDDMPISKIKEIAPNLIIGASAYNTDEMKTAEMGGADYLGVGAVYSTNTKLDARNLGLDGLKNISKIASIPIVAIGGINHLNVENVLECGVSGVAVVSAIVGAENILKSAENMNELIKKYIK</sequence>